<protein>
    <recommendedName>
        <fullName evidence="5">Protein FAM107B</fullName>
    </recommendedName>
</protein>
<reference key="1">
    <citation type="journal article" date="2001" name="Genome Res.">
        <title>Towards a catalog of human genes and proteins: sequencing and analysis of 500 novel complete protein coding human cDNAs.</title>
        <authorList>
            <person name="Wiemann S."/>
            <person name="Weil B."/>
            <person name="Wellenreuther R."/>
            <person name="Gassenhuber J."/>
            <person name="Glassl S."/>
            <person name="Ansorge W."/>
            <person name="Boecher M."/>
            <person name="Bloecker H."/>
            <person name="Bauersachs S."/>
            <person name="Blum H."/>
            <person name="Lauber J."/>
            <person name="Duesterhoeft A."/>
            <person name="Beyer A."/>
            <person name="Koehrer K."/>
            <person name="Strack N."/>
            <person name="Mewes H.-W."/>
            <person name="Ottenwaelder B."/>
            <person name="Obermaier B."/>
            <person name="Tampe J."/>
            <person name="Heubner D."/>
            <person name="Wambutt R."/>
            <person name="Korn B."/>
            <person name="Klein M."/>
            <person name="Poustka A."/>
        </authorList>
    </citation>
    <scope>NUCLEOTIDE SEQUENCE [LARGE SCALE MRNA] (ISOFORM 1)</scope>
    <source>
        <tissue>Testis</tissue>
    </source>
</reference>
<reference key="2">
    <citation type="submission" date="2004-06" db="EMBL/GenBank/DDBJ databases">
        <title>Cloning of human full open reading frames in Gateway(TM) system entry vector (pDONR201).</title>
        <authorList>
            <person name="Ebert L."/>
            <person name="Schick M."/>
            <person name="Neubert P."/>
            <person name="Schatten R."/>
            <person name="Henze S."/>
            <person name="Korn B."/>
        </authorList>
    </citation>
    <scope>NUCLEOTIDE SEQUENCE [LARGE SCALE MRNA] (ISOFORM 1)</scope>
</reference>
<reference key="3">
    <citation type="journal article" date="2004" name="Nat. Genet.">
        <title>Complete sequencing and characterization of 21,243 full-length human cDNAs.</title>
        <authorList>
            <person name="Ota T."/>
            <person name="Suzuki Y."/>
            <person name="Nishikawa T."/>
            <person name="Otsuki T."/>
            <person name="Sugiyama T."/>
            <person name="Irie R."/>
            <person name="Wakamatsu A."/>
            <person name="Hayashi K."/>
            <person name="Sato H."/>
            <person name="Nagai K."/>
            <person name="Kimura K."/>
            <person name="Makita H."/>
            <person name="Sekine M."/>
            <person name="Obayashi M."/>
            <person name="Nishi T."/>
            <person name="Shibahara T."/>
            <person name="Tanaka T."/>
            <person name="Ishii S."/>
            <person name="Yamamoto J."/>
            <person name="Saito K."/>
            <person name="Kawai Y."/>
            <person name="Isono Y."/>
            <person name="Nakamura Y."/>
            <person name="Nagahari K."/>
            <person name="Murakami K."/>
            <person name="Yasuda T."/>
            <person name="Iwayanagi T."/>
            <person name="Wagatsuma M."/>
            <person name="Shiratori A."/>
            <person name="Sudo H."/>
            <person name="Hosoiri T."/>
            <person name="Kaku Y."/>
            <person name="Kodaira H."/>
            <person name="Kondo H."/>
            <person name="Sugawara M."/>
            <person name="Takahashi M."/>
            <person name="Kanda K."/>
            <person name="Yokoi T."/>
            <person name="Furuya T."/>
            <person name="Kikkawa E."/>
            <person name="Omura Y."/>
            <person name="Abe K."/>
            <person name="Kamihara K."/>
            <person name="Katsuta N."/>
            <person name="Sato K."/>
            <person name="Tanikawa M."/>
            <person name="Yamazaki M."/>
            <person name="Ninomiya K."/>
            <person name="Ishibashi T."/>
            <person name="Yamashita H."/>
            <person name="Murakawa K."/>
            <person name="Fujimori K."/>
            <person name="Tanai H."/>
            <person name="Kimata M."/>
            <person name="Watanabe M."/>
            <person name="Hiraoka S."/>
            <person name="Chiba Y."/>
            <person name="Ishida S."/>
            <person name="Ono Y."/>
            <person name="Takiguchi S."/>
            <person name="Watanabe S."/>
            <person name="Yosida M."/>
            <person name="Hotuta T."/>
            <person name="Kusano J."/>
            <person name="Kanehori K."/>
            <person name="Takahashi-Fujii A."/>
            <person name="Hara H."/>
            <person name="Tanase T.-O."/>
            <person name="Nomura Y."/>
            <person name="Togiya S."/>
            <person name="Komai F."/>
            <person name="Hara R."/>
            <person name="Takeuchi K."/>
            <person name="Arita M."/>
            <person name="Imose N."/>
            <person name="Musashino K."/>
            <person name="Yuuki H."/>
            <person name="Oshima A."/>
            <person name="Sasaki N."/>
            <person name="Aotsuka S."/>
            <person name="Yoshikawa Y."/>
            <person name="Matsunawa H."/>
            <person name="Ichihara T."/>
            <person name="Shiohata N."/>
            <person name="Sano S."/>
            <person name="Moriya S."/>
            <person name="Momiyama H."/>
            <person name="Satoh N."/>
            <person name="Takami S."/>
            <person name="Terashima Y."/>
            <person name="Suzuki O."/>
            <person name="Nakagawa S."/>
            <person name="Senoh A."/>
            <person name="Mizoguchi H."/>
            <person name="Goto Y."/>
            <person name="Shimizu F."/>
            <person name="Wakebe H."/>
            <person name="Hishigaki H."/>
            <person name="Watanabe T."/>
            <person name="Sugiyama A."/>
            <person name="Takemoto M."/>
            <person name="Kawakami B."/>
            <person name="Yamazaki M."/>
            <person name="Watanabe K."/>
            <person name="Kumagai A."/>
            <person name="Itakura S."/>
            <person name="Fukuzumi Y."/>
            <person name="Fujimori Y."/>
            <person name="Komiyama M."/>
            <person name="Tashiro H."/>
            <person name="Tanigami A."/>
            <person name="Fujiwara T."/>
            <person name="Ono T."/>
            <person name="Yamada K."/>
            <person name="Fujii Y."/>
            <person name="Ozaki K."/>
            <person name="Hirao M."/>
            <person name="Ohmori Y."/>
            <person name="Kawabata A."/>
            <person name="Hikiji T."/>
            <person name="Kobatake N."/>
            <person name="Inagaki H."/>
            <person name="Ikema Y."/>
            <person name="Okamoto S."/>
            <person name="Okitani R."/>
            <person name="Kawakami T."/>
            <person name="Noguchi S."/>
            <person name="Itoh T."/>
            <person name="Shigeta K."/>
            <person name="Senba T."/>
            <person name="Matsumura K."/>
            <person name="Nakajima Y."/>
            <person name="Mizuno T."/>
            <person name="Morinaga M."/>
            <person name="Sasaki M."/>
            <person name="Togashi T."/>
            <person name="Oyama M."/>
            <person name="Hata H."/>
            <person name="Watanabe M."/>
            <person name="Komatsu T."/>
            <person name="Mizushima-Sugano J."/>
            <person name="Satoh T."/>
            <person name="Shirai Y."/>
            <person name="Takahashi Y."/>
            <person name="Nakagawa K."/>
            <person name="Okumura K."/>
            <person name="Nagase T."/>
            <person name="Nomura N."/>
            <person name="Kikuchi H."/>
            <person name="Masuho Y."/>
            <person name="Yamashita R."/>
            <person name="Nakai K."/>
            <person name="Yada T."/>
            <person name="Nakamura Y."/>
            <person name="Ohara O."/>
            <person name="Isogai T."/>
            <person name="Sugano S."/>
        </authorList>
    </citation>
    <scope>NUCLEOTIDE SEQUENCE [LARGE SCALE MRNA] (ISOFORMS 1 AND 2)</scope>
    <source>
        <tissue>Hippocampus</tissue>
        <tissue>Thalamus</tissue>
    </source>
</reference>
<reference key="4">
    <citation type="journal article" date="2004" name="Nature">
        <title>The DNA sequence and comparative analysis of human chromosome 10.</title>
        <authorList>
            <person name="Deloukas P."/>
            <person name="Earthrowl M.E."/>
            <person name="Grafham D.V."/>
            <person name="Rubenfield M."/>
            <person name="French L."/>
            <person name="Steward C.A."/>
            <person name="Sims S.K."/>
            <person name="Jones M.C."/>
            <person name="Searle S."/>
            <person name="Scott C."/>
            <person name="Howe K."/>
            <person name="Hunt S.E."/>
            <person name="Andrews T.D."/>
            <person name="Gilbert J.G.R."/>
            <person name="Swarbreck D."/>
            <person name="Ashurst J.L."/>
            <person name="Taylor A."/>
            <person name="Battles J."/>
            <person name="Bird C.P."/>
            <person name="Ainscough R."/>
            <person name="Almeida J.P."/>
            <person name="Ashwell R.I.S."/>
            <person name="Ambrose K.D."/>
            <person name="Babbage A.K."/>
            <person name="Bagguley C.L."/>
            <person name="Bailey J."/>
            <person name="Banerjee R."/>
            <person name="Bates K."/>
            <person name="Beasley H."/>
            <person name="Bray-Allen S."/>
            <person name="Brown A.J."/>
            <person name="Brown J.Y."/>
            <person name="Burford D.C."/>
            <person name="Burrill W."/>
            <person name="Burton J."/>
            <person name="Cahill P."/>
            <person name="Camire D."/>
            <person name="Carter N.P."/>
            <person name="Chapman J.C."/>
            <person name="Clark S.Y."/>
            <person name="Clarke G."/>
            <person name="Clee C.M."/>
            <person name="Clegg S."/>
            <person name="Corby N."/>
            <person name="Coulson A."/>
            <person name="Dhami P."/>
            <person name="Dutta I."/>
            <person name="Dunn M."/>
            <person name="Faulkner L."/>
            <person name="Frankish A."/>
            <person name="Frankland J.A."/>
            <person name="Garner P."/>
            <person name="Garnett J."/>
            <person name="Gribble S."/>
            <person name="Griffiths C."/>
            <person name="Grocock R."/>
            <person name="Gustafson E."/>
            <person name="Hammond S."/>
            <person name="Harley J.L."/>
            <person name="Hart E."/>
            <person name="Heath P.D."/>
            <person name="Ho T.P."/>
            <person name="Hopkins B."/>
            <person name="Horne J."/>
            <person name="Howden P.J."/>
            <person name="Huckle E."/>
            <person name="Hynds C."/>
            <person name="Johnson C."/>
            <person name="Johnson D."/>
            <person name="Kana A."/>
            <person name="Kay M."/>
            <person name="Kimberley A.M."/>
            <person name="Kershaw J.K."/>
            <person name="Kokkinaki M."/>
            <person name="Laird G.K."/>
            <person name="Lawlor S."/>
            <person name="Lee H.M."/>
            <person name="Leongamornlert D.A."/>
            <person name="Laird G."/>
            <person name="Lloyd C."/>
            <person name="Lloyd D.M."/>
            <person name="Loveland J."/>
            <person name="Lovell J."/>
            <person name="McLaren S."/>
            <person name="McLay K.E."/>
            <person name="McMurray A."/>
            <person name="Mashreghi-Mohammadi M."/>
            <person name="Matthews L."/>
            <person name="Milne S."/>
            <person name="Nickerson T."/>
            <person name="Nguyen M."/>
            <person name="Overton-Larty E."/>
            <person name="Palmer S.A."/>
            <person name="Pearce A.V."/>
            <person name="Peck A.I."/>
            <person name="Pelan S."/>
            <person name="Phillimore B."/>
            <person name="Porter K."/>
            <person name="Rice C.M."/>
            <person name="Rogosin A."/>
            <person name="Ross M.T."/>
            <person name="Sarafidou T."/>
            <person name="Sehra H.K."/>
            <person name="Shownkeen R."/>
            <person name="Skuce C.D."/>
            <person name="Smith M."/>
            <person name="Standring L."/>
            <person name="Sycamore N."/>
            <person name="Tester J."/>
            <person name="Thorpe A."/>
            <person name="Torcasso W."/>
            <person name="Tracey A."/>
            <person name="Tromans A."/>
            <person name="Tsolas J."/>
            <person name="Wall M."/>
            <person name="Walsh J."/>
            <person name="Wang H."/>
            <person name="Weinstock K."/>
            <person name="West A.P."/>
            <person name="Willey D.L."/>
            <person name="Whitehead S.L."/>
            <person name="Wilming L."/>
            <person name="Wray P.W."/>
            <person name="Young L."/>
            <person name="Chen Y."/>
            <person name="Lovering R.C."/>
            <person name="Moschonas N.K."/>
            <person name="Siebert R."/>
            <person name="Fechtel K."/>
            <person name="Bentley D."/>
            <person name="Durbin R.M."/>
            <person name="Hubbard T."/>
            <person name="Doucette-Stamm L."/>
            <person name="Beck S."/>
            <person name="Smith D.R."/>
            <person name="Rogers J."/>
        </authorList>
    </citation>
    <scope>NUCLEOTIDE SEQUENCE [LARGE SCALE GENOMIC DNA]</scope>
</reference>
<reference key="5">
    <citation type="submission" date="2005-09" db="EMBL/GenBank/DDBJ databases">
        <authorList>
            <person name="Mural R.J."/>
            <person name="Istrail S."/>
            <person name="Sutton G.G."/>
            <person name="Florea L."/>
            <person name="Halpern A.L."/>
            <person name="Mobarry C.M."/>
            <person name="Lippert R."/>
            <person name="Walenz B."/>
            <person name="Shatkay H."/>
            <person name="Dew I."/>
            <person name="Miller J.R."/>
            <person name="Flanigan M.J."/>
            <person name="Edwards N.J."/>
            <person name="Bolanos R."/>
            <person name="Fasulo D."/>
            <person name="Halldorsson B.V."/>
            <person name="Hannenhalli S."/>
            <person name="Turner R."/>
            <person name="Yooseph S."/>
            <person name="Lu F."/>
            <person name="Nusskern D.R."/>
            <person name="Shue B.C."/>
            <person name="Zheng X.H."/>
            <person name="Zhong F."/>
            <person name="Delcher A.L."/>
            <person name="Huson D.H."/>
            <person name="Kravitz S.A."/>
            <person name="Mouchard L."/>
            <person name="Reinert K."/>
            <person name="Remington K.A."/>
            <person name="Clark A.G."/>
            <person name="Waterman M.S."/>
            <person name="Eichler E.E."/>
            <person name="Adams M.D."/>
            <person name="Hunkapiller M.W."/>
            <person name="Myers E.W."/>
            <person name="Venter J.C."/>
        </authorList>
    </citation>
    <scope>NUCLEOTIDE SEQUENCE [LARGE SCALE GENOMIC DNA]</scope>
</reference>
<reference key="6">
    <citation type="journal article" date="2004" name="Genome Res.">
        <title>The status, quality, and expansion of the NIH full-length cDNA project: the Mammalian Gene Collection (MGC).</title>
        <authorList>
            <consortium name="The MGC Project Team"/>
        </authorList>
    </citation>
    <scope>NUCLEOTIDE SEQUENCE [LARGE SCALE MRNA] (ISOFORM 1)</scope>
    <source>
        <tissue>Lymph</tissue>
        <tissue>PNS</tissue>
        <tissue>Testis</tissue>
    </source>
</reference>
<reference key="7">
    <citation type="journal article" date="2009" name="Anal. Chem.">
        <title>Lys-N and trypsin cover complementary parts of the phosphoproteome in a refined SCX-based approach.</title>
        <authorList>
            <person name="Gauci S."/>
            <person name="Helbig A.O."/>
            <person name="Slijper M."/>
            <person name="Krijgsveld J."/>
            <person name="Heck A.J."/>
            <person name="Mohammed S."/>
        </authorList>
    </citation>
    <scope>ACETYLATION [LARGE SCALE ANALYSIS] AT ALA-2</scope>
    <scope>CLEAVAGE OF INITIATOR METHIONINE [LARGE SCALE ANALYSIS]</scope>
    <scope>IDENTIFICATION BY MASS SPECTROMETRY [LARGE SCALE ANALYSIS]</scope>
</reference>
<keyword id="KW-0007">Acetylation</keyword>
<keyword id="KW-0025">Alternative splicing</keyword>
<keyword id="KW-0175">Coiled coil</keyword>
<keyword id="KW-1267">Proteomics identification</keyword>
<keyword id="KW-1185">Reference proteome</keyword>
<comment type="alternative products">
    <event type="alternative splicing"/>
    <isoform>
        <id>Q9H098-1</id>
        <name>1</name>
        <sequence type="displayed"/>
    </isoform>
    <isoform>
        <id>Q9H098-2</id>
        <name>2</name>
        <sequence type="described" ref="VSP_037527"/>
    </isoform>
</comment>
<comment type="similarity">
    <text evidence="5">Belongs to the FAM107 family.</text>
</comment>
<proteinExistence type="evidence at protein level"/>
<sequence length="131" mass="15558">MAEPDYIEDDNPELIRPQKLINPVKTSRNHQDLHRELLMNQKRGLAPQNKPELQKVMEKRKRDQVIKQKEEEAQKKKSDLEIELLKRQQKLEQLELEKQKLQEEQENAPEFVKVKGNLRRTGQEVAQAQES</sequence>
<feature type="initiator methionine" description="Removed" evidence="7">
    <location>
        <position position="1"/>
    </location>
</feature>
<feature type="chain" id="PRO_0000230774" description="Protein FAM107B">
    <location>
        <begin position="2"/>
        <end position="131"/>
    </location>
</feature>
<feature type="region of interest" description="Disordered" evidence="3">
    <location>
        <begin position="39"/>
        <end position="78"/>
    </location>
</feature>
<feature type="region of interest" description="Disordered" evidence="3">
    <location>
        <begin position="100"/>
        <end position="131"/>
    </location>
</feature>
<feature type="coiled-coil region" evidence="2">
    <location>
        <begin position="61"/>
        <end position="112"/>
    </location>
</feature>
<feature type="compositionally biased region" description="Basic and acidic residues" evidence="3">
    <location>
        <begin position="52"/>
        <end position="78"/>
    </location>
</feature>
<feature type="modified residue" description="N-acetylalanine" evidence="7">
    <location>
        <position position="2"/>
    </location>
</feature>
<feature type="modified residue" description="N6-acetyllysine" evidence="1">
    <location>
        <position position="50"/>
    </location>
</feature>
<feature type="splice variant" id="VSP_037527" description="In isoform 2." evidence="4">
    <original>M</original>
    <variation>MSTWKARLTKRLKSPSRSMHPFPCSALLACFGNTRESASFNQSGVADTHSTVRVQPVAKAGRQPRHPSAEGAPEKRQDSSTHAERNGSANRNSSHRTAAQPAETPEDVPGSLDDGADCEAVVFHASIPRPSIIDTPKEEEFREEPKCLELEQKMTSDSPPEDIDHKDSYLITRSIM</variation>
    <location>
        <position position="1"/>
    </location>
</feature>
<evidence type="ECO:0000250" key="1">
    <source>
        <dbReference type="UniProtKB" id="Q3TGF2"/>
    </source>
</evidence>
<evidence type="ECO:0000255" key="2"/>
<evidence type="ECO:0000256" key="3">
    <source>
        <dbReference type="SAM" id="MobiDB-lite"/>
    </source>
</evidence>
<evidence type="ECO:0000303" key="4">
    <source>
    </source>
</evidence>
<evidence type="ECO:0000305" key="5"/>
<evidence type="ECO:0000312" key="6">
    <source>
        <dbReference type="HGNC" id="HGNC:23726"/>
    </source>
</evidence>
<evidence type="ECO:0007744" key="7">
    <source>
    </source>
</evidence>
<dbReference type="EMBL" id="AL136885">
    <property type="protein sequence ID" value="CAB66819.1"/>
    <property type="molecule type" value="mRNA"/>
</dbReference>
<dbReference type="EMBL" id="CR533466">
    <property type="protein sequence ID" value="CAG38497.1"/>
    <property type="molecule type" value="mRNA"/>
</dbReference>
<dbReference type="EMBL" id="AK127413">
    <property type="protein sequence ID" value="BAC86966.1"/>
    <property type="molecule type" value="mRNA"/>
</dbReference>
<dbReference type="EMBL" id="AK289959">
    <property type="protein sequence ID" value="BAF82648.1"/>
    <property type="molecule type" value="mRNA"/>
</dbReference>
<dbReference type="EMBL" id="AL158168">
    <property type="status" value="NOT_ANNOTATED_CDS"/>
    <property type="molecule type" value="Genomic_DNA"/>
</dbReference>
<dbReference type="EMBL" id="AC069544">
    <property type="status" value="NOT_ANNOTATED_CDS"/>
    <property type="molecule type" value="Genomic_DNA"/>
</dbReference>
<dbReference type="EMBL" id="AL157706">
    <property type="status" value="NOT_ANNOTATED_CDS"/>
    <property type="molecule type" value="Genomic_DNA"/>
</dbReference>
<dbReference type="EMBL" id="CH471072">
    <property type="protein sequence ID" value="EAW86268.1"/>
    <property type="molecule type" value="Genomic_DNA"/>
</dbReference>
<dbReference type="EMBL" id="CH471072">
    <property type="protein sequence ID" value="EAW86269.1"/>
    <property type="molecule type" value="Genomic_DNA"/>
</dbReference>
<dbReference type="EMBL" id="CH471072">
    <property type="protein sequence ID" value="EAW86270.1"/>
    <property type="molecule type" value="Genomic_DNA"/>
</dbReference>
<dbReference type="EMBL" id="BC004872">
    <property type="protein sequence ID" value="AAH04872.1"/>
    <property type="molecule type" value="mRNA"/>
</dbReference>
<dbReference type="EMBL" id="BC064407">
    <property type="protein sequence ID" value="AAH64407.1"/>
    <property type="molecule type" value="mRNA"/>
</dbReference>
<dbReference type="EMBL" id="BC072452">
    <property type="protein sequence ID" value="AAH72452.1"/>
    <property type="molecule type" value="mRNA"/>
</dbReference>
<dbReference type="CCDS" id="CCDS60486.1">
    <molecule id="Q9H098-1"/>
</dbReference>
<dbReference type="CCDS" id="CCDS7102.1">
    <molecule id="Q9H098-2"/>
</dbReference>
<dbReference type="RefSeq" id="NP_001269624.1">
    <molecule id="Q9H098-1"/>
    <property type="nucleotide sequence ID" value="NM_001282695.2"/>
</dbReference>
<dbReference type="RefSeq" id="NP_001269625.1">
    <molecule id="Q9H098-1"/>
    <property type="nucleotide sequence ID" value="NM_001282696.2"/>
</dbReference>
<dbReference type="RefSeq" id="NP_001269626.1">
    <molecule id="Q9H098-1"/>
    <property type="nucleotide sequence ID" value="NM_001282697.2"/>
</dbReference>
<dbReference type="RefSeq" id="NP_001269627.1">
    <molecule id="Q9H098-1"/>
    <property type="nucleotide sequence ID" value="NM_001282698.2"/>
</dbReference>
<dbReference type="RefSeq" id="NP_001269628.1">
    <molecule id="Q9H098-1"/>
    <property type="nucleotide sequence ID" value="NM_001282699.1"/>
</dbReference>
<dbReference type="RefSeq" id="NP_001269629.1">
    <molecule id="Q9H098-1"/>
    <property type="nucleotide sequence ID" value="NM_001282700.2"/>
</dbReference>
<dbReference type="RefSeq" id="NP_001269630.1">
    <molecule id="Q9H098-1"/>
    <property type="nucleotide sequence ID" value="NM_001282701.2"/>
</dbReference>
<dbReference type="RefSeq" id="NP_001269631.1">
    <molecule id="Q9H098-1"/>
    <property type="nucleotide sequence ID" value="NM_001282702.2"/>
</dbReference>
<dbReference type="RefSeq" id="NP_001269632.1">
    <molecule id="Q9H098-1"/>
    <property type="nucleotide sequence ID" value="NM_001282703.1"/>
</dbReference>
<dbReference type="RefSeq" id="NP_001307664.1">
    <molecule id="Q9H098-1"/>
    <property type="nucleotide sequence ID" value="NM_001320735.2"/>
</dbReference>
<dbReference type="RefSeq" id="NP_001307665.1">
    <molecule id="Q9H098-1"/>
    <property type="nucleotide sequence ID" value="NM_001320736.2"/>
</dbReference>
<dbReference type="RefSeq" id="NP_001307666.1">
    <molecule id="Q9H098-1"/>
    <property type="nucleotide sequence ID" value="NM_001320737.1"/>
</dbReference>
<dbReference type="RefSeq" id="NP_001307667.1">
    <molecule id="Q9H098-1"/>
    <property type="nucleotide sequence ID" value="NM_001320738.2"/>
</dbReference>
<dbReference type="RefSeq" id="NP_001307668.1">
    <molecule id="Q9H098-1"/>
    <property type="nucleotide sequence ID" value="NM_001320739.2"/>
</dbReference>
<dbReference type="RefSeq" id="NP_001307669.1">
    <molecule id="Q9H098-1"/>
    <property type="nucleotide sequence ID" value="NM_001320740.1"/>
</dbReference>
<dbReference type="RefSeq" id="NP_001307670.1">
    <property type="nucleotide sequence ID" value="NM_001320741.1"/>
</dbReference>
<dbReference type="RefSeq" id="NP_113641.2">
    <molecule id="Q9H098-2"/>
    <property type="nucleotide sequence ID" value="NM_031453.3"/>
</dbReference>
<dbReference type="RefSeq" id="XP_005252673.1">
    <molecule id="Q9H098-1"/>
    <property type="nucleotide sequence ID" value="XM_005252616.5"/>
</dbReference>
<dbReference type="RefSeq" id="XP_011518037.1">
    <property type="nucleotide sequence ID" value="XM_011519735.1"/>
</dbReference>
<dbReference type="RefSeq" id="XP_016872235.1">
    <property type="nucleotide sequence ID" value="XM_017016746.1"/>
</dbReference>
<dbReference type="RefSeq" id="XP_016872236.1">
    <property type="nucleotide sequence ID" value="XM_017016747.1"/>
</dbReference>
<dbReference type="RefSeq" id="XP_016872237.1">
    <property type="nucleotide sequence ID" value="XM_017016748.1"/>
</dbReference>
<dbReference type="RefSeq" id="XP_016872238.1">
    <molecule id="Q9H098-1"/>
    <property type="nucleotide sequence ID" value="XM_017016749.1"/>
</dbReference>
<dbReference type="RefSeq" id="XP_047281769.1">
    <molecule id="Q9H098-1"/>
    <property type="nucleotide sequence ID" value="XM_047425813.1"/>
</dbReference>
<dbReference type="RefSeq" id="XP_047281770.1">
    <molecule id="Q9H098-1"/>
    <property type="nucleotide sequence ID" value="XM_047425814.1"/>
</dbReference>
<dbReference type="RefSeq" id="XP_047281771.1">
    <molecule id="Q9H098-1"/>
    <property type="nucleotide sequence ID" value="XM_047425815.1"/>
</dbReference>
<dbReference type="RefSeq" id="XP_047281772.1">
    <molecule id="Q9H098-1"/>
    <property type="nucleotide sequence ID" value="XM_047425816.1"/>
</dbReference>
<dbReference type="RefSeq" id="XP_047281773.1">
    <molecule id="Q9H098-1"/>
    <property type="nucleotide sequence ID" value="XM_047425817.1"/>
</dbReference>
<dbReference type="RefSeq" id="XP_047281774.1">
    <molecule id="Q9H098-1"/>
    <property type="nucleotide sequence ID" value="XM_047425818.1"/>
</dbReference>
<dbReference type="RefSeq" id="XP_047281775.1">
    <molecule id="Q9H098-1"/>
    <property type="nucleotide sequence ID" value="XM_047425819.1"/>
</dbReference>
<dbReference type="RefSeq" id="XP_047281776.1">
    <molecule id="Q9H098-1"/>
    <property type="nucleotide sequence ID" value="XM_047425820.1"/>
</dbReference>
<dbReference type="RefSeq" id="XP_047281777.1">
    <molecule id="Q9H098-1"/>
    <property type="nucleotide sequence ID" value="XM_047425821.1"/>
</dbReference>
<dbReference type="RefSeq" id="XP_047281778.1">
    <molecule id="Q9H098-1"/>
    <property type="nucleotide sequence ID" value="XM_047425822.1"/>
</dbReference>
<dbReference type="RefSeq" id="XP_047281779.1">
    <molecule id="Q9H098-1"/>
    <property type="nucleotide sequence ID" value="XM_047425823.1"/>
</dbReference>
<dbReference type="RefSeq" id="XP_054222857.1">
    <molecule id="Q9H098-1"/>
    <property type="nucleotide sequence ID" value="XM_054366882.1"/>
</dbReference>
<dbReference type="RefSeq" id="XP_054222858.1">
    <molecule id="Q9H098-1"/>
    <property type="nucleotide sequence ID" value="XM_054366883.1"/>
</dbReference>
<dbReference type="RefSeq" id="XP_054222859.1">
    <molecule id="Q9H098-1"/>
    <property type="nucleotide sequence ID" value="XM_054366884.1"/>
</dbReference>
<dbReference type="RefSeq" id="XP_054222860.1">
    <molecule id="Q9H098-1"/>
    <property type="nucleotide sequence ID" value="XM_054366885.1"/>
</dbReference>
<dbReference type="RefSeq" id="XP_054222861.1">
    <molecule id="Q9H098-1"/>
    <property type="nucleotide sequence ID" value="XM_054366886.1"/>
</dbReference>
<dbReference type="RefSeq" id="XP_054222862.1">
    <molecule id="Q9H098-1"/>
    <property type="nucleotide sequence ID" value="XM_054366887.1"/>
</dbReference>
<dbReference type="RefSeq" id="XP_054222863.1">
    <molecule id="Q9H098-1"/>
    <property type="nucleotide sequence ID" value="XM_054366888.1"/>
</dbReference>
<dbReference type="RefSeq" id="XP_054222864.1">
    <molecule id="Q9H098-1"/>
    <property type="nucleotide sequence ID" value="XM_054366889.1"/>
</dbReference>
<dbReference type="RefSeq" id="XP_054222865.1">
    <molecule id="Q9H098-1"/>
    <property type="nucleotide sequence ID" value="XM_054366890.1"/>
</dbReference>
<dbReference type="RefSeq" id="XP_054222866.1">
    <molecule id="Q9H098-1"/>
    <property type="nucleotide sequence ID" value="XM_054366891.1"/>
</dbReference>
<dbReference type="RefSeq" id="XP_054222867.1">
    <molecule id="Q9H098-1"/>
    <property type="nucleotide sequence ID" value="XM_054366892.1"/>
</dbReference>
<dbReference type="RefSeq" id="XP_054222868.1">
    <molecule id="Q9H098-1"/>
    <property type="nucleotide sequence ID" value="XM_054366893.1"/>
</dbReference>
<dbReference type="SMR" id="Q9H098"/>
<dbReference type="BioGRID" id="123705">
    <property type="interactions" value="19"/>
</dbReference>
<dbReference type="FunCoup" id="Q9H098">
    <property type="interactions" value="227"/>
</dbReference>
<dbReference type="IntAct" id="Q9H098">
    <property type="interactions" value="10"/>
</dbReference>
<dbReference type="STRING" id="9606.ENSP00000181796"/>
<dbReference type="iPTMnet" id="Q9H098"/>
<dbReference type="PhosphoSitePlus" id="Q9H098"/>
<dbReference type="BioMuta" id="FAM107B"/>
<dbReference type="DMDM" id="74752552"/>
<dbReference type="jPOST" id="Q9H098"/>
<dbReference type="MassIVE" id="Q9H098"/>
<dbReference type="PaxDb" id="9606-ENSP00000181796"/>
<dbReference type="PeptideAtlas" id="Q9H098"/>
<dbReference type="ProteomicsDB" id="80227">
    <molecule id="Q9H098-1"/>
</dbReference>
<dbReference type="ProteomicsDB" id="80228">
    <molecule id="Q9H098-2"/>
</dbReference>
<dbReference type="Pumba" id="Q9H098"/>
<dbReference type="TopDownProteomics" id="Q9H098-1">
    <molecule id="Q9H098-1"/>
</dbReference>
<dbReference type="Antibodypedia" id="50918">
    <property type="antibodies" value="53 antibodies from 10 providers"/>
</dbReference>
<dbReference type="DNASU" id="83641"/>
<dbReference type="Ensembl" id="ENST00000181796.7">
    <molecule id="Q9H098-2"/>
    <property type="protein sequence ID" value="ENSP00000181796.2"/>
    <property type="gene ID" value="ENSG00000065809.14"/>
</dbReference>
<dbReference type="Ensembl" id="ENST00000378458.6">
    <molecule id="Q9H098-1"/>
    <property type="protein sequence ID" value="ENSP00000367719.2"/>
    <property type="gene ID" value="ENSG00000065809.14"/>
</dbReference>
<dbReference type="Ensembl" id="ENST00000378462.5">
    <molecule id="Q9H098-1"/>
    <property type="protein sequence ID" value="ENSP00000367723.1"/>
    <property type="gene ID" value="ENSG00000065809.14"/>
</dbReference>
<dbReference type="Ensembl" id="ENST00000378465.7">
    <molecule id="Q9H098-1"/>
    <property type="protein sequence ID" value="ENSP00000367726.3"/>
    <property type="gene ID" value="ENSG00000065809.14"/>
</dbReference>
<dbReference type="Ensembl" id="ENST00000378467.8">
    <molecule id="Q9H098-1"/>
    <property type="protein sequence ID" value="ENSP00000367728.4"/>
    <property type="gene ID" value="ENSG00000065809.14"/>
</dbReference>
<dbReference type="Ensembl" id="ENST00000378470.5">
    <molecule id="Q9H098-1"/>
    <property type="protein sequence ID" value="ENSP00000367731.1"/>
    <property type="gene ID" value="ENSG00000065809.14"/>
</dbReference>
<dbReference type="Ensembl" id="ENST00000468747.5">
    <molecule id="Q9H098-1"/>
    <property type="protein sequence ID" value="ENSP00000418120.1"/>
    <property type="gene ID" value="ENSG00000065809.14"/>
</dbReference>
<dbReference type="Ensembl" id="ENST00000478076.5">
    <molecule id="Q9H098-1"/>
    <property type="protein sequence ID" value="ENSP00000417782.1"/>
    <property type="gene ID" value="ENSG00000065809.14"/>
</dbReference>
<dbReference type="Ensembl" id="ENST00000479731.5">
    <molecule id="Q9H098-1"/>
    <property type="protein sequence ID" value="ENSP00000419603.1"/>
    <property type="gene ID" value="ENSG00000065809.14"/>
</dbReference>
<dbReference type="Ensembl" id="ENST00000496330.5">
    <molecule id="Q9H098-1"/>
    <property type="protein sequence ID" value="ENSP00000418330.1"/>
    <property type="gene ID" value="ENSG00000065809.14"/>
</dbReference>
<dbReference type="Ensembl" id="ENST00000622567.4">
    <molecule id="Q9H098-1"/>
    <property type="protein sequence ID" value="ENSP00000479842.1"/>
    <property type="gene ID" value="ENSG00000065809.14"/>
</dbReference>
<dbReference type="GeneID" id="83641"/>
<dbReference type="KEGG" id="hsa:83641"/>
<dbReference type="MANE-Select" id="ENST00000181796.7">
    <molecule id="Q9H098-2"/>
    <property type="protein sequence ID" value="ENSP00000181796.2"/>
    <property type="RefSeq nucleotide sequence ID" value="NM_031453.4"/>
    <property type="RefSeq protein sequence ID" value="NP_113641.2"/>
</dbReference>
<dbReference type="UCSC" id="uc001imx.3">
    <molecule id="Q9H098-1"/>
    <property type="organism name" value="human"/>
</dbReference>
<dbReference type="AGR" id="HGNC:23726"/>
<dbReference type="CTD" id="83641"/>
<dbReference type="DisGeNET" id="83641"/>
<dbReference type="GeneCards" id="FAM107B"/>
<dbReference type="HGNC" id="HGNC:23726">
    <property type="gene designation" value="FAM107B"/>
</dbReference>
<dbReference type="HPA" id="ENSG00000065809">
    <property type="expression patterns" value="Low tissue specificity"/>
</dbReference>
<dbReference type="neXtProt" id="NX_Q9H098"/>
<dbReference type="OpenTargets" id="ENSG00000065809"/>
<dbReference type="PharmGKB" id="PA134902915"/>
<dbReference type="VEuPathDB" id="HostDB:ENSG00000065809"/>
<dbReference type="eggNOG" id="ENOG502RY4N">
    <property type="taxonomic scope" value="Eukaryota"/>
</dbReference>
<dbReference type="GeneTree" id="ENSGT00390000011228"/>
<dbReference type="HOGENOM" id="CLU_078816_0_0_1"/>
<dbReference type="InParanoid" id="Q9H098"/>
<dbReference type="OMA" id="PQRMDLH"/>
<dbReference type="OrthoDB" id="5963205at2759"/>
<dbReference type="PAN-GO" id="Q9H098">
    <property type="GO annotations" value="0 GO annotations based on evolutionary models"/>
</dbReference>
<dbReference type="PhylomeDB" id="Q9H098"/>
<dbReference type="TreeFam" id="TF325943"/>
<dbReference type="PathwayCommons" id="Q9H098"/>
<dbReference type="SignaLink" id="Q9H098"/>
<dbReference type="BioGRID-ORCS" id="83641">
    <property type="hits" value="9 hits in 1158 CRISPR screens"/>
</dbReference>
<dbReference type="ChiTaRS" id="FAM107B">
    <property type="organism name" value="human"/>
</dbReference>
<dbReference type="GenomeRNAi" id="83641"/>
<dbReference type="Pharos" id="Q9H098">
    <property type="development level" value="Tbio"/>
</dbReference>
<dbReference type="PRO" id="PR:Q9H098"/>
<dbReference type="Proteomes" id="UP000005640">
    <property type="component" value="Chromosome 10"/>
</dbReference>
<dbReference type="RNAct" id="Q9H098">
    <property type="molecule type" value="protein"/>
</dbReference>
<dbReference type="Bgee" id="ENSG00000065809">
    <property type="expression patterns" value="Expressed in corpus callosum and 193 other cell types or tissues"/>
</dbReference>
<dbReference type="ExpressionAtlas" id="Q9H098">
    <property type="expression patterns" value="baseline and differential"/>
</dbReference>
<dbReference type="InterPro" id="IPR009533">
    <property type="entry name" value="FAM107"/>
</dbReference>
<dbReference type="PANTHER" id="PTHR16768">
    <property type="entry name" value="DOWN REGULATED IN RENAL CARCINOMA 1/TU3A"/>
    <property type="match status" value="1"/>
</dbReference>
<dbReference type="PANTHER" id="PTHR16768:SF1">
    <property type="entry name" value="PROTEIN FAM107B"/>
    <property type="match status" value="1"/>
</dbReference>
<dbReference type="Pfam" id="PF06625">
    <property type="entry name" value="DUF1151"/>
    <property type="match status" value="1"/>
</dbReference>
<gene>
    <name evidence="6" type="primary">FAM107B</name>
    <name type="synonym">C10orf45</name>
</gene>
<accession>Q9H098</accession>
<accession>A8K1P4</accession>
<accession>D3DRT2</accession>
<accession>Q5T9K7</accession>
<accession>Q5T9K8</accession>
<accession>Q6ZSI4</accession>
<organism>
    <name type="scientific">Homo sapiens</name>
    <name type="common">Human</name>
    <dbReference type="NCBI Taxonomy" id="9606"/>
    <lineage>
        <taxon>Eukaryota</taxon>
        <taxon>Metazoa</taxon>
        <taxon>Chordata</taxon>
        <taxon>Craniata</taxon>
        <taxon>Vertebrata</taxon>
        <taxon>Euteleostomi</taxon>
        <taxon>Mammalia</taxon>
        <taxon>Eutheria</taxon>
        <taxon>Euarchontoglires</taxon>
        <taxon>Primates</taxon>
        <taxon>Haplorrhini</taxon>
        <taxon>Catarrhini</taxon>
        <taxon>Hominidae</taxon>
        <taxon>Homo</taxon>
    </lineage>
</organism>
<name>F107B_HUMAN</name>